<name>CP52D_CANMA</name>
<accession>P16141</accession>
<accession>Q12582</accession>
<keyword id="KW-0903">Direct protein sequencing</keyword>
<keyword id="KW-0349">Heme</keyword>
<keyword id="KW-0408">Iron</keyword>
<keyword id="KW-0472">Membrane</keyword>
<keyword id="KW-0479">Metal-binding</keyword>
<keyword id="KW-0503">Monooxygenase</keyword>
<keyword id="KW-0560">Oxidoreductase</keyword>
<keyword id="KW-0812">Transmembrane</keyword>
<keyword id="KW-1133">Transmembrane helix</keyword>
<organism>
    <name type="scientific">Candida maltosa</name>
    <name type="common">Yeast</name>
    <dbReference type="NCBI Taxonomy" id="5479"/>
    <lineage>
        <taxon>Eukaryota</taxon>
        <taxon>Fungi</taxon>
        <taxon>Dikarya</taxon>
        <taxon>Ascomycota</taxon>
        <taxon>Saccharomycotina</taxon>
        <taxon>Pichiomycetes</taxon>
        <taxon>Debaryomycetaceae</taxon>
        <taxon>Candida/Lodderomyces clade</taxon>
        <taxon>Candida</taxon>
    </lineage>
</organism>
<sequence>MPVSFVHNVLEVVTPYVEYYQENLTKWYILIPTILLTLNFLSILHTKYLEYKFNAKPLTNFAQDYSFGVITPLMLMYFKWHGTVMEFACNVWNNKFLVLNGNVRTVGLRIMGLNIIETTDPENVKAILATQFNDFSLGTRHDFLYSLLGDGIFTLDGAGWKHSRAMLRPQFAREQVAHVKLLEPHVQVLFKHVRKSQGKTFDIQELFFRLTVDSSTEFLFGGSVESLRDASIGMTPSTKNIAGREEFADAFNYSQTYNAYRFLLQQFYWILNGSKFNKSIKTVHKFADFYVQKALSLTEADLEKQEGYVFLYELAKQTRDPKVLRDQLLNILVAGRDTTAGLLSFLFFELSRNPTVFEKLKEEIHNRFGAKEDARVEEITFESLKLCEYLKACVNEALRVYPSVPHNFRVATRNTTLPRGGGKDGMSPIAIKKGQNVMYTILATHRDPNIYGEDANVFRPERWFEPETRKLGWAYVPFNGGPRICLGQQFALTEASYVTVRLLQEFHTLTQDADTRYPPRLQNSLTLSLCDGANIQMY</sequence>
<feature type="initiator methionine" description="Removed" evidence="3">
    <location>
        <position position="1"/>
    </location>
</feature>
<feature type="chain" id="PRO_0000052022" description="Cytochrome P450 52A4">
    <location>
        <begin position="2"/>
        <end position="538"/>
    </location>
</feature>
<feature type="transmembrane region" description="Helical" evidence="2">
    <location>
        <begin position="27"/>
        <end position="46"/>
    </location>
</feature>
<feature type="binding site" description="axial binding residue" evidence="1">
    <location>
        <position position="485"/>
    </location>
    <ligand>
        <name>heme</name>
        <dbReference type="ChEBI" id="CHEBI:30413"/>
    </ligand>
    <ligandPart>
        <name>Fe</name>
        <dbReference type="ChEBI" id="CHEBI:18248"/>
    </ligandPart>
</feature>
<feature type="sequence variant" description="In strain: EH15.">
    <original>P</original>
    <variation>S</variation>
    <location>
        <position position="2"/>
    </location>
</feature>
<feature type="sequence variant" description="In strain: EH15.">
    <original>N</original>
    <variation>P</variation>
    <location>
        <position position="39"/>
    </location>
</feature>
<feature type="sequence variant" description="In strain: EH15.">
    <original>T</original>
    <variation>V</variation>
    <location>
        <position position="235"/>
    </location>
</feature>
<feature type="sequence variant" description="In strain: EH15.">
    <original>EA</original>
    <variation>DD</variation>
    <location>
        <begin position="299"/>
        <end position="300"/>
    </location>
</feature>
<feature type="sequence variant" description="In strain: EH15.">
    <original>L</original>
    <variation>S</variation>
    <location>
        <position position="442"/>
    </location>
</feature>
<feature type="sequence variant" description="In strain: EH15.">
    <original>N</original>
    <variation>S</variation>
    <location>
        <position position="449"/>
    </location>
</feature>
<feature type="sequence variant" description="In strain: EH15.">
    <original>D</original>
    <variation>N</variation>
    <location>
        <position position="514"/>
    </location>
</feature>
<feature type="sequence variant" description="In strain: EH15.">
    <original>L</original>
    <variation>V</variation>
    <location>
        <position position="527"/>
    </location>
</feature>
<proteinExistence type="evidence at protein level"/>
<evidence type="ECO:0000250" key="1"/>
<evidence type="ECO:0000255" key="2"/>
<evidence type="ECO:0000269" key="3">
    <source>
    </source>
</evidence>
<evidence type="ECO:0000305" key="4"/>
<comment type="function">
    <text evidence="3">Together with an NADPH cytochrome P450 the enzyme system catalyzes the terminal hydroxylation as the first step in the assimilation of alkanes and fatty acids.</text>
</comment>
<comment type="cofactor">
    <cofactor evidence="1">
        <name>heme</name>
        <dbReference type="ChEBI" id="CHEBI:30413"/>
    </cofactor>
</comment>
<comment type="subcellular location">
    <subcellularLocation>
        <location evidence="4">Membrane</location>
    </subcellularLocation>
    <subcellularLocation>
        <location>Membrane</location>
        <topology>Single-pass membrane protein</topology>
    </subcellularLocation>
</comment>
<comment type="induction">
    <text>By alkanes.</text>
</comment>
<comment type="similarity">
    <text evidence="4">Belongs to the cytochrome P450 family.</text>
</comment>
<reference key="1">
    <citation type="journal article" date="1991" name="DNA Cell Biol.">
        <title>CYP52 (cytochrome P450alk) multigene family in Candida maltosa: molecular cloning and nucleotide sequence of the two tandemly arranged genes.</title>
        <authorList>
            <person name="Ohkuma M."/>
            <person name="Tanimoto T."/>
            <person name="Yano K."/>
            <person name="Takagi M."/>
        </authorList>
    </citation>
    <scope>NUCLEOTIDE SEQUENCE [GENOMIC DNA]</scope>
    <source>
        <strain>ATCC 28140 / CBS 5611 / IAM 12247 / JCM 1504 / NBRC 1977</strain>
    </source>
</reference>
<reference key="2">
    <citation type="journal article" date="1991" name="Eur. J. Cell Biol.">
        <title>Comparison of two cytochromes P-450 from Candida maltosa: primary structures, substrate specificities and effects of their expression in Saccharomyces cerevisiae on the proliferation of the endoplasmic reticulum.</title>
        <authorList>
            <person name="Schunck W.-H."/>
            <person name="Vogel F."/>
            <person name="Gross B."/>
            <person name="Kaergel E."/>
            <person name="Mauersberger S."/>
            <person name="Koepke K."/>
            <person name="Gengnagel C."/>
            <person name="Mueller H.-G."/>
        </authorList>
    </citation>
    <scope>NUCLEOTIDE SEQUENCE [MRNA]</scope>
    <source>
        <strain>EH15</strain>
    </source>
</reference>
<reference key="3">
    <citation type="journal article" date="1996" name="Arch. Biochem. Biophys.">
        <title>Characterization of the n-alkane and fatty acid hydroxylating cytochrome P450 forms 52A3 and 52A4.</title>
        <authorList>
            <person name="Scheller U."/>
            <person name="Zimmer T."/>
            <person name="Kargel E."/>
            <person name="Schunck W.H."/>
        </authorList>
    </citation>
    <scope>PROTEIN SEQUENCE OF 2-15</scope>
    <scope>FUNCTION</scope>
    <source>
        <strain>EH15</strain>
    </source>
</reference>
<reference key="4">
    <citation type="journal article" date="1996" name="Biochem. Biophys. Res. Commun.">
        <title>The CYP52 multigene family of Candida maltosa encodes functionally diverse n-alkane-inducible cytochromes P450.</title>
        <authorList>
            <person name="Zimmer T."/>
            <person name="Ohkuma M."/>
            <person name="Ohta A."/>
            <person name="Takagi M."/>
            <person name="Schunck W.H."/>
        </authorList>
    </citation>
    <scope>CHARACTERIZATION</scope>
</reference>
<protein>
    <recommendedName>
        <fullName>Cytochrome P450 52A4</fullName>
        <ecNumber>1.14.14.-</ecNumber>
    </recommendedName>
    <alternativeName>
        <fullName>Alkane-inducible P450-ALK3-A</fullName>
    </alternativeName>
    <alternativeName>
        <fullName>CYPLIIA4</fullName>
    </alternativeName>
    <alternativeName>
        <fullName>Cytochrome P450-CM2</fullName>
    </alternativeName>
</protein>
<dbReference type="EC" id="1.14.14.-"/>
<dbReference type="EMBL" id="X55881">
    <property type="protein sequence ID" value="CAA39367.1"/>
    <property type="molecule type" value="Genomic_DNA"/>
</dbReference>
<dbReference type="EMBL" id="X51932">
    <property type="protein sequence ID" value="CAA36198.1"/>
    <property type="molecule type" value="mRNA"/>
</dbReference>
<dbReference type="PIR" id="B40576">
    <property type="entry name" value="B40576"/>
</dbReference>
<dbReference type="PIR" id="S08668">
    <property type="entry name" value="O4CKA4"/>
</dbReference>
<dbReference type="SMR" id="P16141"/>
<dbReference type="GO" id="GO:0016020">
    <property type="term" value="C:membrane"/>
    <property type="evidence" value="ECO:0007669"/>
    <property type="project" value="UniProtKB-SubCell"/>
</dbReference>
<dbReference type="GO" id="GO:0020037">
    <property type="term" value="F:heme binding"/>
    <property type="evidence" value="ECO:0007669"/>
    <property type="project" value="InterPro"/>
</dbReference>
<dbReference type="GO" id="GO:0005506">
    <property type="term" value="F:iron ion binding"/>
    <property type="evidence" value="ECO:0007669"/>
    <property type="project" value="InterPro"/>
</dbReference>
<dbReference type="GO" id="GO:0016712">
    <property type="term" value="F:oxidoreductase activity, acting on paired donors, with incorporation or reduction of molecular oxygen, reduced flavin or flavoprotein as one donor, and incorporation of one atom of oxygen"/>
    <property type="evidence" value="ECO:0007669"/>
    <property type="project" value="InterPro"/>
</dbReference>
<dbReference type="CDD" id="cd11063">
    <property type="entry name" value="CYP52"/>
    <property type="match status" value="1"/>
</dbReference>
<dbReference type="Gene3D" id="1.10.630.10">
    <property type="entry name" value="Cytochrome P450"/>
    <property type="match status" value="1"/>
</dbReference>
<dbReference type="InterPro" id="IPR001128">
    <property type="entry name" value="Cyt_P450"/>
</dbReference>
<dbReference type="InterPro" id="IPR017972">
    <property type="entry name" value="Cyt_P450_CS"/>
</dbReference>
<dbReference type="InterPro" id="IPR002974">
    <property type="entry name" value="Cyt_P450_E_CYP52_ascomycetes"/>
</dbReference>
<dbReference type="InterPro" id="IPR047146">
    <property type="entry name" value="Cyt_P450_E_CYP52_fungi"/>
</dbReference>
<dbReference type="InterPro" id="IPR002402">
    <property type="entry name" value="Cyt_P450_E_grp-II"/>
</dbReference>
<dbReference type="InterPro" id="IPR036396">
    <property type="entry name" value="Cyt_P450_sf"/>
</dbReference>
<dbReference type="PANTHER" id="PTHR24287">
    <property type="entry name" value="P450, PUTATIVE (EUROFUNG)-RELATED"/>
    <property type="match status" value="1"/>
</dbReference>
<dbReference type="PANTHER" id="PTHR24287:SF1">
    <property type="entry name" value="P450, PUTATIVE (EUROFUNG)-RELATED"/>
    <property type="match status" value="1"/>
</dbReference>
<dbReference type="Pfam" id="PF00067">
    <property type="entry name" value="p450"/>
    <property type="match status" value="1"/>
</dbReference>
<dbReference type="PRINTS" id="PR00464">
    <property type="entry name" value="EP450II"/>
</dbReference>
<dbReference type="PRINTS" id="PR01239">
    <property type="entry name" value="EP450IICYP52"/>
</dbReference>
<dbReference type="PRINTS" id="PR00385">
    <property type="entry name" value="P450"/>
</dbReference>
<dbReference type="SUPFAM" id="SSF48264">
    <property type="entry name" value="Cytochrome P450"/>
    <property type="match status" value="1"/>
</dbReference>
<dbReference type="PROSITE" id="PS00086">
    <property type="entry name" value="CYTOCHROME_P450"/>
    <property type="match status" value="1"/>
</dbReference>
<gene>
    <name type="primary">CYP52A4</name>
</gene>